<reference key="1">
    <citation type="journal article" date="1991" name="Curr. Genet.">
        <title>Structure of the Aspergillus niger pelA gene and its expression in Aspergillus niger and Aspergillus nidulans.</title>
        <authorList>
            <person name="Kusters-Van Someren M.A."/>
            <person name="Harmsen J.A.M."/>
            <person name="Kester H.C.M."/>
            <person name="Visser J."/>
        </authorList>
    </citation>
    <scope>NUCLEOTIDE SEQUENCE [GENOMIC DNA]</scope>
    <scope>PROTEIN SEQUENCE OF 21-40 AND 115-125</scope>
    <source>
        <strain>ATCC 9029 / NRRL 3 / CBS 120.49 / DSM 2466 / N400 / FGSC 732</strain>
    </source>
</reference>
<reference key="2">
    <citation type="journal article" date="1990" name="Curr. Genet.">
        <title>Cloning and expression of a second Aspergillus niger pectin lyase gene (pelA): indications of a pectin lyase gene family in A. niger.</title>
        <authorList>
            <person name="Harmsen J.A.M."/>
            <person name="Kurster-Van Sommeren M.A."/>
            <person name="Visser J."/>
        </authorList>
    </citation>
    <scope>NUCLEOTIDE SEQUENCE [GENOMIC DNA] OF 1-49</scope>
    <source>
        <strain>ATCC 9029 / NRRL 3 / CBS 120.49 / DSM 2466 / N400 / FGSC 732</strain>
    </source>
</reference>
<reference key="3">
    <citation type="journal article" date="1997" name="Structure">
        <title>Two crystal structures of pectin lyase A from Aspergillus reveal a pH driven conformational change and striking divergence in the substrate-binding clefts of pectin and pectate lyases.</title>
        <authorList>
            <person name="Mayans O."/>
            <person name="Scott M."/>
            <person name="Connerton I."/>
            <person name="Gravesen T."/>
            <person name="Benen J."/>
            <person name="Visser J."/>
            <person name="Pickersgill R."/>
            <person name="Jenkins J."/>
        </authorList>
    </citation>
    <scope>X-RAY CRYSTALLOGRAPHY (2.4 ANGSTROMS) OF 21-379 FOR STRAIN N400</scope>
    <scope>X-RAY CRYSTALLOGRAPHY (1.93 ANGSTROMS) OF 21-379 FOR STRAIN 4M-147</scope>
    <scope>VARIANTS LYS-32; SER-39; THR-121; ALA-233; ALA-268; TRP-273; GLU-309; SER-316 AND SER-337</scope>
    <source>
        <strain>4M-147</strain>
        <strain>ATCC 9029 / NRRL 3 / CBS 120.49 / DSM 2466 / N400 / FGSC 732</strain>
    </source>
</reference>
<gene>
    <name type="primary">pelA</name>
</gene>
<keyword id="KW-0002">3D-structure</keyword>
<keyword id="KW-0119">Carbohydrate metabolism</keyword>
<keyword id="KW-0961">Cell wall biogenesis/degradation</keyword>
<keyword id="KW-0903">Direct protein sequencing</keyword>
<keyword id="KW-1015">Disulfide bond</keyword>
<keyword id="KW-0325">Glycoprotein</keyword>
<keyword id="KW-0456">Lyase</keyword>
<keyword id="KW-0624">Polysaccharide degradation</keyword>
<keyword id="KW-0964">Secreted</keyword>
<keyword id="KW-0732">Signal</keyword>
<comment type="function">
    <text>Pectinolytic enzymes consist of four classes of enzymes: pectin lyase, polygalacturonase, pectin methylesterase and rhamnogalacturonase. Among pectinolytic enzymes, pectin lyase is the most important in depolymerization of pectin, since it cleaves internal glycosidic bonds of highly methylated pectins.</text>
</comment>
<comment type="catalytic activity">
    <reaction>
        <text>Eliminative cleavage of (1-&gt;4)-alpha-D-galacturonan methyl ester to give oligosaccharides with 4-deoxy-6-O-methyl-alpha-D-galact-4-enuronosyl groups at their non-reducing ends.</text>
        <dbReference type="EC" id="4.2.2.10"/>
    </reaction>
</comment>
<comment type="subcellular location">
    <subcellularLocation>
        <location evidence="4">Secreted</location>
    </subcellularLocation>
</comment>
<comment type="PTM">
    <text>N-glycosylated at Asn-129 and O-glycosylated at Thr-88 when expressed in Aspergillus nidulans. The protein from strain 4M-147 is O-glycosylated at Thr-88 and Ser-368. PubMed:9195887 modeled GalNAc at the O-glycosylation site, a glycosylation not observed in fungi. The O-linked saccharide is probably mannose.</text>
</comment>
<comment type="similarity">
    <text evidence="4">Belongs to the polysaccharide lyase 1 family.</text>
</comment>
<accession>Q01172</accession>
<evidence type="ECO:0000255" key="1"/>
<evidence type="ECO:0000269" key="2">
    <source>
    </source>
</evidence>
<evidence type="ECO:0000269" key="3">
    <source>
    </source>
</evidence>
<evidence type="ECO:0000305" key="4"/>
<evidence type="ECO:0007829" key="5">
    <source>
        <dbReference type="PDB" id="1IDJ"/>
    </source>
</evidence>
<evidence type="ECO:0007829" key="6">
    <source>
        <dbReference type="PDB" id="1IDK"/>
    </source>
</evidence>
<name>PELA_ASPNG</name>
<organism>
    <name type="scientific">Aspergillus niger</name>
    <dbReference type="NCBI Taxonomy" id="5061"/>
    <lineage>
        <taxon>Eukaryota</taxon>
        <taxon>Fungi</taxon>
        <taxon>Dikarya</taxon>
        <taxon>Ascomycota</taxon>
        <taxon>Pezizomycotina</taxon>
        <taxon>Eurotiomycetes</taxon>
        <taxon>Eurotiomycetidae</taxon>
        <taxon>Eurotiales</taxon>
        <taxon>Aspergillaceae</taxon>
        <taxon>Aspergillus</taxon>
        <taxon>Aspergillus subgen. Circumdati</taxon>
    </lineage>
</organism>
<feature type="signal peptide" evidence="2">
    <location>
        <begin position="1"/>
        <end position="20"/>
    </location>
</feature>
<feature type="chain" id="PRO_0000024896" description="Pectin lyase A">
    <location>
        <begin position="21"/>
        <end position="379"/>
    </location>
</feature>
<feature type="active site" evidence="1">
    <location>
        <position position="256"/>
    </location>
</feature>
<feature type="glycosylation site" description="O-linked (Man) threonine">
    <location>
        <position position="88"/>
    </location>
</feature>
<feature type="glycosylation site" description="N-linked (GlcNAc...) asparagine" evidence="4">
    <location>
        <position position="129"/>
    </location>
</feature>
<feature type="glycosylation site" description="O-linked (Man) serine; in strain 4M-147">
    <location>
        <position position="368"/>
    </location>
</feature>
<feature type="disulfide bond">
    <location>
        <begin position="83"/>
        <end position="102"/>
    </location>
</feature>
<feature type="disulfide bond">
    <location>
        <begin position="92"/>
        <end position="226"/>
    </location>
</feature>
<feature type="disulfide bond">
    <location>
        <begin position="322"/>
        <end position="330"/>
    </location>
</feature>
<feature type="sequence variant" description="In strain: 4M-147." evidence="3">
    <original>E</original>
    <variation>K</variation>
    <location>
        <position position="32"/>
    </location>
</feature>
<feature type="sequence variant" description="In strain: 4M-147." evidence="3">
    <original>D</original>
    <variation>S</variation>
    <location>
        <position position="39"/>
    </location>
</feature>
<feature type="sequence variant" description="In strain: 4M-147." evidence="3">
    <original>V</original>
    <variation>T</variation>
    <location>
        <position position="121"/>
    </location>
</feature>
<feature type="sequence variant" description="In strain: 4M-147." evidence="3">
    <original>G</original>
    <variation>A</variation>
    <location>
        <position position="233"/>
    </location>
</feature>
<feature type="sequence variant" description="In strain: 4M-147." evidence="3">
    <original>C</original>
    <variation>A</variation>
    <location>
        <position position="268"/>
    </location>
</feature>
<feature type="sequence variant" description="In strain: 4M-147." evidence="3">
    <original>F</original>
    <variation>W</variation>
    <location>
        <position position="273"/>
    </location>
</feature>
<feature type="sequence variant" description="In strain: 4M-147." evidence="3">
    <original>A</original>
    <variation>E</variation>
    <location>
        <position position="309"/>
    </location>
</feature>
<feature type="sequence variant" description="In strain: 4M-147." evidence="3">
    <original>T</original>
    <variation>S</variation>
    <location>
        <position position="316"/>
    </location>
</feature>
<feature type="sequence variant" description="In strain: 4M-147." evidence="3">
    <original>C</original>
    <variation>S</variation>
    <location>
        <position position="337"/>
    </location>
</feature>
<feature type="helix" evidence="6">
    <location>
        <begin position="29"/>
        <end position="31"/>
    </location>
</feature>
<feature type="turn" evidence="6">
    <location>
        <begin position="36"/>
        <end position="39"/>
    </location>
</feature>
<feature type="helix" evidence="6">
    <location>
        <begin position="48"/>
        <end position="56"/>
    </location>
</feature>
<feature type="strand" evidence="6">
    <location>
        <begin position="57"/>
        <end position="59"/>
    </location>
</feature>
<feature type="strand" evidence="6">
    <location>
        <begin position="61"/>
        <end position="65"/>
    </location>
</feature>
<feature type="strand" evidence="6">
    <location>
        <begin position="67"/>
        <end position="70"/>
    </location>
</feature>
<feature type="turn" evidence="6">
    <location>
        <begin position="72"/>
        <end position="75"/>
    </location>
</feature>
<feature type="strand" evidence="6">
    <location>
        <begin position="77"/>
        <end position="83"/>
    </location>
</feature>
<feature type="strand" evidence="6">
    <location>
        <begin position="94"/>
        <end position="96"/>
    </location>
</feature>
<feature type="helix" evidence="6">
    <location>
        <begin position="98"/>
        <end position="100"/>
    </location>
</feature>
<feature type="helix" evidence="6">
    <location>
        <begin position="101"/>
        <end position="105"/>
    </location>
</feature>
<feature type="strand" evidence="6">
    <location>
        <begin position="111"/>
        <end position="119"/>
    </location>
</feature>
<feature type="strand" evidence="6">
    <location>
        <begin position="124"/>
        <end position="126"/>
    </location>
</feature>
<feature type="strand" evidence="6">
    <location>
        <begin position="128"/>
        <end position="134"/>
    </location>
</feature>
<feature type="turn" evidence="6">
    <location>
        <begin position="136"/>
        <end position="138"/>
    </location>
</feature>
<feature type="strand" evidence="6">
    <location>
        <begin position="140"/>
        <end position="143"/>
    </location>
</feature>
<feature type="strand" evidence="6">
    <location>
        <begin position="146"/>
        <end position="148"/>
    </location>
</feature>
<feature type="strand" evidence="6">
    <location>
        <begin position="153"/>
        <end position="159"/>
    </location>
</feature>
<feature type="strand" evidence="6">
    <location>
        <begin position="161"/>
        <end position="165"/>
    </location>
</feature>
<feature type="strand" evidence="6">
    <location>
        <begin position="175"/>
        <end position="178"/>
    </location>
</feature>
<feature type="strand" evidence="6">
    <location>
        <begin position="182"/>
        <end position="188"/>
    </location>
</feature>
<feature type="strand" evidence="6">
    <location>
        <begin position="190"/>
        <end position="196"/>
    </location>
</feature>
<feature type="strand" evidence="6">
    <location>
        <begin position="198"/>
        <end position="201"/>
    </location>
</feature>
<feature type="strand" evidence="6">
    <location>
        <begin position="208"/>
        <end position="213"/>
    </location>
</feature>
<feature type="strand" evidence="6">
    <location>
        <begin position="215"/>
        <end position="217"/>
    </location>
</feature>
<feature type="strand" evidence="5">
    <location>
        <begin position="221"/>
        <end position="223"/>
    </location>
</feature>
<feature type="strand" evidence="6">
    <location>
        <begin position="226"/>
        <end position="231"/>
    </location>
</feature>
<feature type="strand" evidence="6">
    <location>
        <begin position="234"/>
        <end position="236"/>
    </location>
</feature>
<feature type="strand" evidence="6">
    <location>
        <begin position="242"/>
        <end position="247"/>
    </location>
</feature>
<feature type="strand" evidence="6">
    <location>
        <begin position="249"/>
        <end position="253"/>
    </location>
</feature>
<feature type="strand" evidence="6">
    <location>
        <begin position="265"/>
        <end position="270"/>
    </location>
</feature>
<feature type="strand" evidence="6">
    <location>
        <begin position="272"/>
        <end position="283"/>
    </location>
</feature>
<feature type="strand" evidence="6">
    <location>
        <begin position="288"/>
        <end position="293"/>
    </location>
</feature>
<feature type="strand" evidence="6">
    <location>
        <begin position="295"/>
        <end position="311"/>
    </location>
</feature>
<feature type="helix" evidence="6">
    <location>
        <begin position="318"/>
        <end position="322"/>
    </location>
</feature>
<feature type="helix" evidence="6">
    <location>
        <begin position="323"/>
        <end position="326"/>
    </location>
</feature>
<feature type="strand" evidence="6">
    <location>
        <begin position="334"/>
        <end position="338"/>
    </location>
</feature>
<feature type="helix" evidence="6">
    <location>
        <begin position="349"/>
        <end position="352"/>
    </location>
</feature>
<feature type="helix" evidence="6">
    <location>
        <begin position="363"/>
        <end position="365"/>
    </location>
</feature>
<feature type="helix" evidence="6">
    <location>
        <begin position="366"/>
        <end position="373"/>
    </location>
</feature>
<proteinExistence type="evidence at protein level"/>
<sequence>MKYSTIFSAAAAVFAGSAAAVGVSGSAEGFAEGVTGGGDATPVYPDTIDELVSYLGDDEARVIVLTKTFDFTDSEGTTTGTGCAPWGTASACQVAIDQDDWCENYEPDAPSVSVEYYNAGVLGITVTSNKSLIGEGSSGAIKGKGLRIVSGAENIIIQNIAVTDINPKYVWGGDAITLDDCDLVWIDHVTTARIGRQHYVLGTSADNRVSLTNNYIDGVSDYSATCDGYHYWGIYLDGDADLVTMKGNYIYHTSGRSPKVQDNTLLHCVNNYFYDISGHAFEIGEGGYVLAEGNVFQNVDTVLETYEGAAFTVPSTTAGEVCSTYLGRDCVINGFGCSGTFSEDSTSFLSDFEGKNIASASAYTSVASRVVANAGQGNL</sequence>
<protein>
    <recommendedName>
        <fullName>Pectin lyase A</fullName>
        <shortName>PLA</shortName>
        <ecNumber>4.2.2.10</ecNumber>
    </recommendedName>
    <alternativeName>
        <fullName>Pectin lyase II</fullName>
        <shortName>PLII</shortName>
    </alternativeName>
</protein>
<dbReference type="EC" id="4.2.2.10"/>
<dbReference type="EMBL" id="X60724">
    <property type="protein sequence ID" value="CAA43130.1"/>
    <property type="molecule type" value="Genomic_DNA"/>
</dbReference>
<dbReference type="EMBL" id="X55784">
    <property type="protein sequence ID" value="CAA39305.1"/>
    <property type="molecule type" value="Genomic_DNA"/>
</dbReference>
<dbReference type="PIR" id="S17979">
    <property type="entry name" value="S17979"/>
</dbReference>
<dbReference type="PDB" id="1IDJ">
    <property type="method" value="X-ray"/>
    <property type="resolution" value="2.40 A"/>
    <property type="chains" value="A/B=21-379"/>
</dbReference>
<dbReference type="PDB" id="1IDK">
    <property type="method" value="X-ray"/>
    <property type="resolution" value="1.93 A"/>
    <property type="chains" value="A=21-379"/>
</dbReference>
<dbReference type="PDBsum" id="1IDJ"/>
<dbReference type="PDBsum" id="1IDK"/>
<dbReference type="SMR" id="Q01172"/>
<dbReference type="CAZy" id="PL1">
    <property type="family name" value="Polysaccharide Lyase Family 1"/>
</dbReference>
<dbReference type="GlyCosmos" id="Q01172">
    <property type="glycosylation" value="3 sites, No reported glycans"/>
</dbReference>
<dbReference type="PaxDb" id="5061-CADANGAP00011153"/>
<dbReference type="VEuPathDB" id="FungiDB:An14g04370"/>
<dbReference type="VEuPathDB" id="FungiDB:ASPNIDRAFT2_1161674"/>
<dbReference type="VEuPathDB" id="FungiDB:ATCC64974_3740"/>
<dbReference type="VEuPathDB" id="FungiDB:M747DRAFT_327313"/>
<dbReference type="eggNOG" id="ENOG502QXM6">
    <property type="taxonomic scope" value="Eukaryota"/>
</dbReference>
<dbReference type="BioCyc" id="MetaCyc:MONOMER-20551"/>
<dbReference type="BRENDA" id="4.2.2.10">
    <property type="organism ID" value="518"/>
</dbReference>
<dbReference type="EvolutionaryTrace" id="Q01172"/>
<dbReference type="GO" id="GO:0005576">
    <property type="term" value="C:extracellular region"/>
    <property type="evidence" value="ECO:0007669"/>
    <property type="project" value="UniProtKB-SubCell"/>
</dbReference>
<dbReference type="GO" id="GO:0030570">
    <property type="term" value="F:pectate lyase activity"/>
    <property type="evidence" value="ECO:0007669"/>
    <property type="project" value="InterPro"/>
</dbReference>
<dbReference type="GO" id="GO:0047490">
    <property type="term" value="F:pectin lyase activity"/>
    <property type="evidence" value="ECO:0007669"/>
    <property type="project" value="UniProtKB-EC"/>
</dbReference>
<dbReference type="GO" id="GO:0071555">
    <property type="term" value="P:cell wall organization"/>
    <property type="evidence" value="ECO:0007669"/>
    <property type="project" value="UniProtKB-KW"/>
</dbReference>
<dbReference type="GO" id="GO:0000272">
    <property type="term" value="P:polysaccharide catabolic process"/>
    <property type="evidence" value="ECO:0007669"/>
    <property type="project" value="UniProtKB-KW"/>
</dbReference>
<dbReference type="FunFam" id="2.160.20.10:FF:000003">
    <property type="entry name" value="Pectin lyase F"/>
    <property type="match status" value="1"/>
</dbReference>
<dbReference type="Gene3D" id="2.160.20.10">
    <property type="entry name" value="Single-stranded right-handed beta-helix, Pectin lyase-like"/>
    <property type="match status" value="1"/>
</dbReference>
<dbReference type="InterPro" id="IPR002022">
    <property type="entry name" value="Pec_lyase"/>
</dbReference>
<dbReference type="InterPro" id="IPR012334">
    <property type="entry name" value="Pectin_lyas_fold"/>
</dbReference>
<dbReference type="InterPro" id="IPR011050">
    <property type="entry name" value="Pectin_lyase_fold/virulence"/>
</dbReference>
<dbReference type="InterPro" id="IPR045032">
    <property type="entry name" value="PEL"/>
</dbReference>
<dbReference type="PANTHER" id="PTHR31683">
    <property type="entry name" value="PECTATE LYASE 18-RELATED"/>
    <property type="match status" value="1"/>
</dbReference>
<dbReference type="PANTHER" id="PTHR31683:SF16">
    <property type="entry name" value="PECTIN LYASE A-RELATED"/>
    <property type="match status" value="1"/>
</dbReference>
<dbReference type="Pfam" id="PF00544">
    <property type="entry name" value="Pectate_lyase_4"/>
    <property type="match status" value="1"/>
</dbReference>
<dbReference type="SMART" id="SM00656">
    <property type="entry name" value="Amb_all"/>
    <property type="match status" value="1"/>
</dbReference>
<dbReference type="SUPFAM" id="SSF51126">
    <property type="entry name" value="Pectin lyase-like"/>
    <property type="match status" value="1"/>
</dbReference>